<keyword id="KW-1029">Fimbrium biogenesis</keyword>
<keyword id="KW-0804">Transcription</keyword>
<keyword id="KW-0805">Transcription regulation</keyword>
<feature type="chain" id="PRO_0000079766" description="F1845 fimbrial adhesin operon regulatory protein DaaF">
    <location>
        <begin position="1"/>
        <end position="75"/>
    </location>
</feature>
<accession>Q47132</accession>
<gene>
    <name type="primary">daaF</name>
</gene>
<dbReference type="EMBL" id="M98766">
    <property type="protein sequence ID" value="AAA23662.1"/>
    <property type="molecule type" value="Genomic_DNA"/>
</dbReference>
<dbReference type="PIR" id="S35904">
    <property type="entry name" value="S35904"/>
</dbReference>
<dbReference type="RefSeq" id="WP_000700580.1">
    <property type="nucleotide sequence ID" value="NZ_WSXD01000148.1"/>
</dbReference>
<dbReference type="SMR" id="Q47132"/>
<dbReference type="GO" id="GO:0006355">
    <property type="term" value="P:regulation of DNA-templated transcription"/>
    <property type="evidence" value="ECO:0007669"/>
    <property type="project" value="InterPro"/>
</dbReference>
<dbReference type="Gene3D" id="1.10.10.10">
    <property type="entry name" value="Winged helix-like DNA-binding domain superfamily/Winged helix DNA-binding domain"/>
    <property type="match status" value="1"/>
</dbReference>
<dbReference type="InterPro" id="IPR006793">
    <property type="entry name" value="FaeA"/>
</dbReference>
<dbReference type="InterPro" id="IPR036388">
    <property type="entry name" value="WH-like_DNA-bd_sf"/>
</dbReference>
<dbReference type="InterPro" id="IPR036390">
    <property type="entry name" value="WH_DNA-bd_sf"/>
</dbReference>
<dbReference type="Pfam" id="PF04703">
    <property type="entry name" value="FaeA"/>
    <property type="match status" value="1"/>
</dbReference>
<dbReference type="SUPFAM" id="SSF46785">
    <property type="entry name" value="Winged helix' DNA-binding domain"/>
    <property type="match status" value="1"/>
</dbReference>
<comment type="function">
    <text>May have a possible regulatory function on the expression of the other daa genes.</text>
</comment>
<proteinExistence type="predicted"/>
<sequence length="75" mass="8544">MKINKLTLNERKNDILSYFGEINAPCRTSEVAEHLGVSAYQARHYLQCLEKEGKIKRSPVRRGASTLWEISSIPP</sequence>
<protein>
    <recommendedName>
        <fullName>F1845 fimbrial adhesin operon regulatory protein DaaF</fullName>
    </recommendedName>
</protein>
<name>DAAF_ECOLX</name>
<reference key="1">
    <citation type="journal article" date="1993" name="Mol. Microbiol.">
        <title>Transcriptional organization of the F1845 fimbrial adhesin determinant of Escherichia coli.</title>
        <authorList>
            <person name="Bilge S.S."/>
            <person name="Apostol J.A. Jr."/>
            <person name="Fullner K.J."/>
            <person name="Moseley S.L."/>
        </authorList>
    </citation>
    <scope>NUCLEOTIDE SEQUENCE [GENOMIC DNA]</scope>
    <source>
        <strain>O75:NM / C1845 / DAEC</strain>
    </source>
</reference>
<organism>
    <name type="scientific">Escherichia coli</name>
    <dbReference type="NCBI Taxonomy" id="562"/>
    <lineage>
        <taxon>Bacteria</taxon>
        <taxon>Pseudomonadati</taxon>
        <taxon>Pseudomonadota</taxon>
        <taxon>Gammaproteobacteria</taxon>
        <taxon>Enterobacterales</taxon>
        <taxon>Enterobacteriaceae</taxon>
        <taxon>Escherichia</taxon>
    </lineage>
</organism>